<protein>
    <recommendedName>
        <fullName>Histone H3</fullName>
    </recommendedName>
</protein>
<gene>
    <name type="primary">H3-I</name>
</gene>
<gene>
    <name type="primary">H3-II</name>
</gene>
<reference key="1">
    <citation type="journal article" date="1988" name="Nucleic Acids Res.">
        <title>Histone genes of Volvox carteri: DNA sequence and organization of two H3-H4 gene loci.</title>
        <authorList>
            <person name="Mueller K."/>
            <person name="Schmitt R."/>
        </authorList>
    </citation>
    <scope>NUCLEOTIDE SEQUENCE [GENOMIC DNA]</scope>
    <source>
        <strain>f. Nagariensis / HK10</strain>
    </source>
</reference>
<organism>
    <name type="scientific">Volvox carteri</name>
    <name type="common">Green alga</name>
    <dbReference type="NCBI Taxonomy" id="3067"/>
    <lineage>
        <taxon>Eukaryota</taxon>
        <taxon>Viridiplantae</taxon>
        <taxon>Chlorophyta</taxon>
        <taxon>core chlorophytes</taxon>
        <taxon>Chlorophyceae</taxon>
        <taxon>CS clade</taxon>
        <taxon>Chlamydomonadales</taxon>
        <taxon>Volvocaceae</taxon>
        <taxon>Volvox</taxon>
    </lineage>
</organism>
<proteinExistence type="inferred from homology"/>
<comment type="function">
    <text>Core component of nucleosome. Nucleosomes wrap and compact DNA into chromatin, limiting DNA accessibility to the cellular machineries which require DNA as a template. Histones thereby play a central role in transcription regulation, DNA repair, DNA replication and chromosomal stability. DNA accessibility is regulated via a complex set of post-translational modifications of histones, also called histone code, and nucleosome remodeling.</text>
</comment>
<comment type="subunit">
    <text>The nucleosome is a histone octamer containing two molecules each of H2A, H2B, H3 and H4 assembled in one H3-H4 heterotetramer and two H2A-H2B heterodimers. The octamer wraps approximately 147 bp of DNA.</text>
</comment>
<comment type="subcellular location">
    <subcellularLocation>
        <location evidence="1">Nucleus</location>
    </subcellularLocation>
    <subcellularLocation>
        <location evidence="1">Chromosome</location>
    </subcellularLocation>
</comment>
<comment type="similarity">
    <text evidence="3">Belongs to the histone H3 family.</text>
</comment>
<sequence>MARTKQTARKSTGGKAPRKQLATKAARKTPATGGVKKPHRYRPGTVALREIRKYQKSTELLIRKLPFQRLVREIAQDFKTDLRFQSQAVLALQEAAEAYLVGLFEDTNLCAIHAKRVTIMPKDIQLARRIRGERA</sequence>
<evidence type="ECO:0000250" key="1"/>
<evidence type="ECO:0000256" key="2">
    <source>
        <dbReference type="SAM" id="MobiDB-lite"/>
    </source>
</evidence>
<evidence type="ECO:0000305" key="3"/>
<accession>P08437</accession>
<keyword id="KW-0158">Chromosome</keyword>
<keyword id="KW-0238">DNA-binding</keyword>
<keyword id="KW-0544">Nucleosome core</keyword>
<keyword id="KW-0539">Nucleus</keyword>
<dbReference type="EMBL" id="X06963">
    <property type="protein sequence ID" value="CAA30035.1"/>
    <property type="molecule type" value="Genomic_DNA"/>
</dbReference>
<dbReference type="EMBL" id="X06964">
    <property type="protein sequence ID" value="CAA30037.1"/>
    <property type="molecule type" value="Genomic_DNA"/>
</dbReference>
<dbReference type="PIR" id="S00940">
    <property type="entry name" value="S00940"/>
</dbReference>
<dbReference type="SMR" id="P08437"/>
<dbReference type="KEGG" id="vcn:VOLCADRAFT_101585"/>
<dbReference type="KEGG" id="vcn:VOLCADRAFT_108835"/>
<dbReference type="KEGG" id="vcn:VOLCADRAFT_56755"/>
<dbReference type="KEGG" id="vcn:VOLCADRAFT_56978"/>
<dbReference type="KEGG" id="vcn:VOLCADRAFT_57055"/>
<dbReference type="KEGG" id="vcn:VOLCADRAFT_57650"/>
<dbReference type="KEGG" id="vcn:VOLCADRAFT_63067"/>
<dbReference type="KEGG" id="vcn:VOLCADRAFT_63197"/>
<dbReference type="KEGG" id="vcn:VOLCADRAFT_97851"/>
<dbReference type="KEGG" id="vcn:VOLCADRAFT_97860"/>
<dbReference type="OMA" id="HIFAEMA"/>
<dbReference type="GO" id="GO:0000786">
    <property type="term" value="C:nucleosome"/>
    <property type="evidence" value="ECO:0007669"/>
    <property type="project" value="UniProtKB-KW"/>
</dbReference>
<dbReference type="GO" id="GO:0005634">
    <property type="term" value="C:nucleus"/>
    <property type="evidence" value="ECO:0007669"/>
    <property type="project" value="UniProtKB-SubCell"/>
</dbReference>
<dbReference type="GO" id="GO:0003677">
    <property type="term" value="F:DNA binding"/>
    <property type="evidence" value="ECO:0007669"/>
    <property type="project" value="UniProtKB-KW"/>
</dbReference>
<dbReference type="GO" id="GO:0046982">
    <property type="term" value="F:protein heterodimerization activity"/>
    <property type="evidence" value="ECO:0007669"/>
    <property type="project" value="InterPro"/>
</dbReference>
<dbReference type="GO" id="GO:0030527">
    <property type="term" value="F:structural constituent of chromatin"/>
    <property type="evidence" value="ECO:0007669"/>
    <property type="project" value="InterPro"/>
</dbReference>
<dbReference type="CDD" id="cd22911">
    <property type="entry name" value="HFD_H3"/>
    <property type="match status" value="1"/>
</dbReference>
<dbReference type="FunFam" id="1.10.20.10:FF:000078">
    <property type="entry name" value="Histone H3"/>
    <property type="match status" value="1"/>
</dbReference>
<dbReference type="FunFam" id="1.10.20.10:FF:000044">
    <property type="entry name" value="Histone H3.3"/>
    <property type="match status" value="1"/>
</dbReference>
<dbReference type="Gene3D" id="1.10.20.10">
    <property type="entry name" value="Histone, subunit A"/>
    <property type="match status" value="1"/>
</dbReference>
<dbReference type="InterPro" id="IPR009072">
    <property type="entry name" value="Histone-fold"/>
</dbReference>
<dbReference type="InterPro" id="IPR007125">
    <property type="entry name" value="Histone_H2A/H2B/H3"/>
</dbReference>
<dbReference type="InterPro" id="IPR000164">
    <property type="entry name" value="Histone_H3/CENP-A"/>
</dbReference>
<dbReference type="PANTHER" id="PTHR11426">
    <property type="entry name" value="HISTONE H3"/>
    <property type="match status" value="1"/>
</dbReference>
<dbReference type="Pfam" id="PF00125">
    <property type="entry name" value="Histone"/>
    <property type="match status" value="1"/>
</dbReference>
<dbReference type="PRINTS" id="PR00622">
    <property type="entry name" value="HISTONEH3"/>
</dbReference>
<dbReference type="SMART" id="SM00428">
    <property type="entry name" value="H3"/>
    <property type="match status" value="1"/>
</dbReference>
<dbReference type="SUPFAM" id="SSF47113">
    <property type="entry name" value="Histone-fold"/>
    <property type="match status" value="1"/>
</dbReference>
<dbReference type="PROSITE" id="PS00322">
    <property type="entry name" value="HISTONE_H3_1"/>
    <property type="match status" value="1"/>
</dbReference>
<dbReference type="PROSITE" id="PS00959">
    <property type="entry name" value="HISTONE_H3_2"/>
    <property type="match status" value="1"/>
</dbReference>
<feature type="initiator methionine" description="Removed" evidence="3">
    <location>
        <position position="1"/>
    </location>
</feature>
<feature type="chain" id="PRO_0000221352" description="Histone H3">
    <location>
        <begin position="2"/>
        <end position="135"/>
    </location>
</feature>
<feature type="region of interest" description="Disordered" evidence="2">
    <location>
        <begin position="1"/>
        <end position="40"/>
    </location>
</feature>
<name>H3_VOLCA</name>